<comment type="tissue specificity">
    <text evidence="1">Not detected in seedlings, leaves, embryos or root and shoot meristems.</text>
</comment>
<comment type="caution">
    <text evidence="1">Could be the product of a pseudogene. Truncated purine permease that is probably not expressed.</text>
</comment>
<accession>Q3ED99</accession>
<reference key="1">
    <citation type="journal article" date="2000" name="Nature">
        <title>Sequence and analysis of chromosome 1 of the plant Arabidopsis thaliana.</title>
        <authorList>
            <person name="Theologis A."/>
            <person name="Ecker J.R."/>
            <person name="Palm C.J."/>
            <person name="Federspiel N.A."/>
            <person name="Kaul S."/>
            <person name="White O."/>
            <person name="Alonso J."/>
            <person name="Altafi H."/>
            <person name="Araujo R."/>
            <person name="Bowman C.L."/>
            <person name="Brooks S.Y."/>
            <person name="Buehler E."/>
            <person name="Chan A."/>
            <person name="Chao Q."/>
            <person name="Chen H."/>
            <person name="Cheuk R.F."/>
            <person name="Chin C.W."/>
            <person name="Chung M.K."/>
            <person name="Conn L."/>
            <person name="Conway A.B."/>
            <person name="Conway A.R."/>
            <person name="Creasy T.H."/>
            <person name="Dewar K."/>
            <person name="Dunn P."/>
            <person name="Etgu P."/>
            <person name="Feldblyum T.V."/>
            <person name="Feng J.-D."/>
            <person name="Fong B."/>
            <person name="Fujii C.Y."/>
            <person name="Gill J.E."/>
            <person name="Goldsmith A.D."/>
            <person name="Haas B."/>
            <person name="Hansen N.F."/>
            <person name="Hughes B."/>
            <person name="Huizar L."/>
            <person name="Hunter J.L."/>
            <person name="Jenkins J."/>
            <person name="Johnson-Hopson C."/>
            <person name="Khan S."/>
            <person name="Khaykin E."/>
            <person name="Kim C.J."/>
            <person name="Koo H.L."/>
            <person name="Kremenetskaia I."/>
            <person name="Kurtz D.B."/>
            <person name="Kwan A."/>
            <person name="Lam B."/>
            <person name="Langin-Hooper S."/>
            <person name="Lee A."/>
            <person name="Lee J.M."/>
            <person name="Lenz C.A."/>
            <person name="Li J.H."/>
            <person name="Li Y.-P."/>
            <person name="Lin X."/>
            <person name="Liu S.X."/>
            <person name="Liu Z.A."/>
            <person name="Luros J.S."/>
            <person name="Maiti R."/>
            <person name="Marziali A."/>
            <person name="Militscher J."/>
            <person name="Miranda M."/>
            <person name="Nguyen M."/>
            <person name="Nierman W.C."/>
            <person name="Osborne B.I."/>
            <person name="Pai G."/>
            <person name="Peterson J."/>
            <person name="Pham P.K."/>
            <person name="Rizzo M."/>
            <person name="Rooney T."/>
            <person name="Rowley D."/>
            <person name="Sakano H."/>
            <person name="Salzberg S.L."/>
            <person name="Schwartz J.R."/>
            <person name="Shinn P."/>
            <person name="Southwick A.M."/>
            <person name="Sun H."/>
            <person name="Tallon L.J."/>
            <person name="Tambunga G."/>
            <person name="Toriumi M.J."/>
            <person name="Town C.D."/>
            <person name="Utterback T."/>
            <person name="Van Aken S."/>
            <person name="Vaysberg M."/>
            <person name="Vysotskaia V.S."/>
            <person name="Walker M."/>
            <person name="Wu D."/>
            <person name="Yu G."/>
            <person name="Fraser C.M."/>
            <person name="Venter J.C."/>
            <person name="Davis R.W."/>
        </authorList>
    </citation>
    <scope>NUCLEOTIDE SEQUENCE [LARGE SCALE GENOMIC DNA]</scope>
    <source>
        <strain>cv. Columbia</strain>
    </source>
</reference>
<reference key="2">
    <citation type="journal article" date="2017" name="Plant J.">
        <title>Araport11: a complete reannotation of the Arabidopsis thaliana reference genome.</title>
        <authorList>
            <person name="Cheng C.Y."/>
            <person name="Krishnakumar V."/>
            <person name="Chan A.P."/>
            <person name="Thibaud-Nissen F."/>
            <person name="Schobel S."/>
            <person name="Town C.D."/>
        </authorList>
    </citation>
    <scope>GENOME REANNOTATION</scope>
    <source>
        <strain>cv. Columbia</strain>
    </source>
</reference>
<reference key="3">
    <citation type="journal article" date="2000" name="Plant Cell">
        <title>A new family of high-affinity transporters for adenine, cytosine, and purine derivatives in Arabidopsis.</title>
        <authorList>
            <person name="Gillissen B."/>
            <person name="Buerkle L."/>
            <person name="Andre B."/>
            <person name="Kuehn C."/>
            <person name="Rentsch D."/>
            <person name="Brandl B."/>
            <person name="Frommer W.B."/>
        </authorList>
    </citation>
    <scope>GENE FAMILY</scope>
    <scope>NOMENCLATURE</scope>
</reference>
<reference key="4">
    <citation type="journal article" date="2016" name="Science">
        <title>Plant development regulated by cytokinin sinks.</title>
        <authorList>
            <person name="Zuercher E."/>
            <person name="Liu J."/>
            <person name="di Donato M."/>
            <person name="Geisler M."/>
            <person name="Mueller B."/>
        </authorList>
    </citation>
    <scope>LACK OF TISSUE SPECIFICITY</scope>
</reference>
<keyword id="KW-1185">Reference proteome</keyword>
<name>PUP9_ARATH</name>
<sequence length="45" mass="5260">MDKEIHQFGKGHVLHQMLRILELEVIQIMPKVMTNKKKPTLHIGV</sequence>
<protein>
    <recommendedName>
        <fullName evidence="2">Putative purine permease 9</fullName>
    </recommendedName>
</protein>
<evidence type="ECO:0000269" key="1">
    <source>
    </source>
</evidence>
<evidence type="ECO:0000303" key="2">
    <source>
    </source>
</evidence>
<evidence type="ECO:0000312" key="3">
    <source>
        <dbReference type="Araport" id="AT1G18220"/>
    </source>
</evidence>
<evidence type="ECO:0000312" key="4">
    <source>
        <dbReference type="EMBL" id="AC034107"/>
    </source>
</evidence>
<evidence type="ECO:0000312" key="5">
    <source>
        <dbReference type="Proteomes" id="UP000006548"/>
    </source>
</evidence>
<organism evidence="5">
    <name type="scientific">Arabidopsis thaliana</name>
    <name type="common">Mouse-ear cress</name>
    <dbReference type="NCBI Taxonomy" id="3702"/>
    <lineage>
        <taxon>Eukaryota</taxon>
        <taxon>Viridiplantae</taxon>
        <taxon>Streptophyta</taxon>
        <taxon>Embryophyta</taxon>
        <taxon>Tracheophyta</taxon>
        <taxon>Spermatophyta</taxon>
        <taxon>Magnoliopsida</taxon>
        <taxon>eudicotyledons</taxon>
        <taxon>Gunneridae</taxon>
        <taxon>Pentapetalae</taxon>
        <taxon>rosids</taxon>
        <taxon>malvids</taxon>
        <taxon>Brassicales</taxon>
        <taxon>Brassicaceae</taxon>
        <taxon>Camelineae</taxon>
        <taxon>Arabidopsis</taxon>
    </lineage>
</organism>
<feature type="chain" id="PRO_0000439872" description="Putative purine permease 9">
    <location>
        <begin position="1"/>
        <end position="45"/>
    </location>
</feature>
<dbReference type="EMBL" id="AC034107">
    <property type="status" value="NOT_ANNOTATED_CDS"/>
    <property type="molecule type" value="Genomic_DNA"/>
</dbReference>
<dbReference type="EMBL" id="CP002684">
    <property type="protein sequence ID" value="AEE29689.1"/>
    <property type="molecule type" value="Genomic_DNA"/>
</dbReference>
<dbReference type="RefSeq" id="NP_173260.1">
    <property type="nucleotide sequence ID" value="NM_101682.1"/>
</dbReference>
<dbReference type="SMR" id="Q3ED99"/>
<dbReference type="STRING" id="3702.Q3ED99"/>
<dbReference type="PaxDb" id="3702-AT1G18220.1"/>
<dbReference type="EnsemblPlants" id="AT1G18220.1">
    <property type="protein sequence ID" value="AT1G18220.1"/>
    <property type="gene ID" value="AT1G18220"/>
</dbReference>
<dbReference type="GeneID" id="838402"/>
<dbReference type="Gramene" id="AT1G18220.1">
    <property type="protein sequence ID" value="AT1G18220.1"/>
    <property type="gene ID" value="AT1G18220"/>
</dbReference>
<dbReference type="KEGG" id="ath:AT1G18220"/>
<dbReference type="Araport" id="AT1G18220"/>
<dbReference type="TAIR" id="AT1G18220">
    <property type="gene designation" value="PUP9"/>
</dbReference>
<dbReference type="HOGENOM" id="CLU_3208291_0_0_1"/>
<dbReference type="InParanoid" id="Q3ED99"/>
<dbReference type="Proteomes" id="UP000006548">
    <property type="component" value="Chromosome 1"/>
</dbReference>
<dbReference type="ExpressionAtlas" id="Q3ED99">
    <property type="expression patterns" value="baseline and differential"/>
</dbReference>
<dbReference type="GO" id="GO:0016020">
    <property type="term" value="C:membrane"/>
    <property type="evidence" value="ECO:0000304"/>
    <property type="project" value="TAIR"/>
</dbReference>
<dbReference type="GO" id="GO:0005345">
    <property type="term" value="F:purine nucleobase transmembrane transporter activity"/>
    <property type="evidence" value="ECO:0000304"/>
    <property type="project" value="TAIR"/>
</dbReference>
<dbReference type="GO" id="GO:0006863">
    <property type="term" value="P:purine nucleobase transport"/>
    <property type="evidence" value="ECO:0000304"/>
    <property type="project" value="TAIR"/>
</dbReference>
<gene>
    <name evidence="2" type="primary">PUP9</name>
    <name evidence="3" type="ordered locus">At1g18220</name>
    <name evidence="4" type="ORF">T10F20</name>
</gene>
<proteinExistence type="uncertain"/>